<proteinExistence type="inferred from homology"/>
<keyword id="KW-1185">Reference proteome</keyword>
<keyword id="KW-0687">Ribonucleoprotein</keyword>
<keyword id="KW-0689">Ribosomal protein</keyword>
<keyword id="KW-0694">RNA-binding</keyword>
<keyword id="KW-0699">rRNA-binding</keyword>
<reference key="1">
    <citation type="journal article" date="2001" name="Proc. Natl. Acad. Sci. U.S.A.">
        <title>Complete genome sequence of Caulobacter crescentus.</title>
        <authorList>
            <person name="Nierman W.C."/>
            <person name="Feldblyum T.V."/>
            <person name="Laub M.T."/>
            <person name="Paulsen I.T."/>
            <person name="Nelson K.E."/>
            <person name="Eisen J.A."/>
            <person name="Heidelberg J.F."/>
            <person name="Alley M.R.K."/>
            <person name="Ohta N."/>
            <person name="Maddock J.R."/>
            <person name="Potocka I."/>
            <person name="Nelson W.C."/>
            <person name="Newton A."/>
            <person name="Stephens C."/>
            <person name="Phadke N.D."/>
            <person name="Ely B."/>
            <person name="DeBoy R.T."/>
            <person name="Dodson R.J."/>
            <person name="Durkin A.S."/>
            <person name="Gwinn M.L."/>
            <person name="Haft D.H."/>
            <person name="Kolonay J.F."/>
            <person name="Smit J."/>
            <person name="Craven M.B."/>
            <person name="Khouri H.M."/>
            <person name="Shetty J."/>
            <person name="Berry K.J."/>
            <person name="Utterback T.R."/>
            <person name="Tran K."/>
            <person name="Wolf A.M."/>
            <person name="Vamathevan J.J."/>
            <person name="Ermolaeva M.D."/>
            <person name="White O."/>
            <person name="Salzberg S.L."/>
            <person name="Venter J.C."/>
            <person name="Shapiro L."/>
            <person name="Fraser C.M."/>
        </authorList>
    </citation>
    <scope>NUCLEOTIDE SEQUENCE [LARGE SCALE GENOMIC DNA]</scope>
    <source>
        <strain>ATCC 19089 / CIP 103742 / CB 15</strain>
    </source>
</reference>
<name>RL9_CAUVC</name>
<accession>Q9A7Q3</accession>
<protein>
    <recommendedName>
        <fullName evidence="1">Large ribosomal subunit protein bL9</fullName>
    </recommendedName>
    <alternativeName>
        <fullName evidence="3">50S ribosomal protein L9</fullName>
    </alternativeName>
</protein>
<feature type="chain" id="PRO_0000176626" description="Large ribosomal subunit protein bL9">
    <location>
        <begin position="1"/>
        <end position="194"/>
    </location>
</feature>
<feature type="region of interest" description="Disordered" evidence="2">
    <location>
        <begin position="148"/>
        <end position="194"/>
    </location>
</feature>
<dbReference type="EMBL" id="AE005673">
    <property type="protein sequence ID" value="AAK23645.1"/>
    <property type="molecule type" value="Genomic_DNA"/>
</dbReference>
<dbReference type="PIR" id="A87456">
    <property type="entry name" value="A87456"/>
</dbReference>
<dbReference type="RefSeq" id="NP_420477.1">
    <property type="nucleotide sequence ID" value="NC_002696.2"/>
</dbReference>
<dbReference type="RefSeq" id="WP_010919540.1">
    <property type="nucleotide sequence ID" value="NC_002696.2"/>
</dbReference>
<dbReference type="SMR" id="Q9A7Q3"/>
<dbReference type="STRING" id="190650.CC_1667"/>
<dbReference type="EnsemblBacteria" id="AAK23645">
    <property type="protein sequence ID" value="AAK23645"/>
    <property type="gene ID" value="CC_1667"/>
</dbReference>
<dbReference type="KEGG" id="ccr:CC_1667"/>
<dbReference type="PATRIC" id="fig|190650.5.peg.1696"/>
<dbReference type="eggNOG" id="COG0359">
    <property type="taxonomic scope" value="Bacteria"/>
</dbReference>
<dbReference type="HOGENOM" id="CLU_078938_1_0_5"/>
<dbReference type="BioCyc" id="CAULO:CC1667-MONOMER"/>
<dbReference type="Proteomes" id="UP000001816">
    <property type="component" value="Chromosome"/>
</dbReference>
<dbReference type="GO" id="GO:1990904">
    <property type="term" value="C:ribonucleoprotein complex"/>
    <property type="evidence" value="ECO:0007669"/>
    <property type="project" value="UniProtKB-KW"/>
</dbReference>
<dbReference type="GO" id="GO:0005840">
    <property type="term" value="C:ribosome"/>
    <property type="evidence" value="ECO:0007669"/>
    <property type="project" value="UniProtKB-KW"/>
</dbReference>
<dbReference type="GO" id="GO:0019843">
    <property type="term" value="F:rRNA binding"/>
    <property type="evidence" value="ECO:0007669"/>
    <property type="project" value="UniProtKB-UniRule"/>
</dbReference>
<dbReference type="GO" id="GO:0003735">
    <property type="term" value="F:structural constituent of ribosome"/>
    <property type="evidence" value="ECO:0007669"/>
    <property type="project" value="InterPro"/>
</dbReference>
<dbReference type="GO" id="GO:0006412">
    <property type="term" value="P:translation"/>
    <property type="evidence" value="ECO:0007669"/>
    <property type="project" value="UniProtKB-UniRule"/>
</dbReference>
<dbReference type="Gene3D" id="3.10.430.100">
    <property type="entry name" value="Ribosomal protein L9, C-terminal domain"/>
    <property type="match status" value="1"/>
</dbReference>
<dbReference type="Gene3D" id="3.40.5.10">
    <property type="entry name" value="Ribosomal protein L9, N-terminal domain"/>
    <property type="match status" value="1"/>
</dbReference>
<dbReference type="HAMAP" id="MF_00503">
    <property type="entry name" value="Ribosomal_bL9"/>
    <property type="match status" value="1"/>
</dbReference>
<dbReference type="InterPro" id="IPR000244">
    <property type="entry name" value="Ribosomal_bL9"/>
</dbReference>
<dbReference type="InterPro" id="IPR009027">
    <property type="entry name" value="Ribosomal_bL9/RNase_H1_N"/>
</dbReference>
<dbReference type="InterPro" id="IPR020594">
    <property type="entry name" value="Ribosomal_bL9_bac/chp"/>
</dbReference>
<dbReference type="InterPro" id="IPR020069">
    <property type="entry name" value="Ribosomal_bL9_C"/>
</dbReference>
<dbReference type="InterPro" id="IPR036791">
    <property type="entry name" value="Ribosomal_bL9_C_sf"/>
</dbReference>
<dbReference type="InterPro" id="IPR020070">
    <property type="entry name" value="Ribosomal_bL9_N"/>
</dbReference>
<dbReference type="InterPro" id="IPR036935">
    <property type="entry name" value="Ribosomal_bL9_N_sf"/>
</dbReference>
<dbReference type="NCBIfam" id="TIGR00158">
    <property type="entry name" value="L9"/>
    <property type="match status" value="1"/>
</dbReference>
<dbReference type="PANTHER" id="PTHR21368">
    <property type="entry name" value="50S RIBOSOMAL PROTEIN L9"/>
    <property type="match status" value="1"/>
</dbReference>
<dbReference type="Pfam" id="PF03948">
    <property type="entry name" value="Ribosomal_L9_C"/>
    <property type="match status" value="1"/>
</dbReference>
<dbReference type="Pfam" id="PF01281">
    <property type="entry name" value="Ribosomal_L9_N"/>
    <property type="match status" value="1"/>
</dbReference>
<dbReference type="SUPFAM" id="SSF55658">
    <property type="entry name" value="L9 N-domain-like"/>
    <property type="match status" value="1"/>
</dbReference>
<dbReference type="SUPFAM" id="SSF55653">
    <property type="entry name" value="Ribosomal protein L9 C-domain"/>
    <property type="match status" value="1"/>
</dbReference>
<dbReference type="PROSITE" id="PS00651">
    <property type="entry name" value="RIBOSOMAL_L9"/>
    <property type="match status" value="1"/>
</dbReference>
<comment type="function">
    <text evidence="1">Binds to the 23S rRNA.</text>
</comment>
<comment type="similarity">
    <text evidence="1">Belongs to the bacterial ribosomal protein bL9 family.</text>
</comment>
<evidence type="ECO:0000255" key="1">
    <source>
        <dbReference type="HAMAP-Rule" id="MF_00503"/>
    </source>
</evidence>
<evidence type="ECO:0000256" key="2">
    <source>
        <dbReference type="SAM" id="MobiDB-lite"/>
    </source>
</evidence>
<evidence type="ECO:0000305" key="3"/>
<gene>
    <name evidence="1" type="primary">rplI</name>
    <name type="ordered locus">CC_1667</name>
</gene>
<sequence length="194" mass="20909">MKVILLERVEGTGVLGDEVTVKDGFARNYLLPRGKALRATKANLATFEAQRAEIEARNVKNRESAAKNGEALDGTQYILIRQAGESGQLYGSVAGRDVADAIKAEGGKVDRSMVVLDKPIKTLGVHEVKVKLHAEVTITVTLNIARSQDEAERQARGENVINSQFEEDRAAEAEAAQDMAEGGAGSFEGDHYEA</sequence>
<organism>
    <name type="scientific">Caulobacter vibrioides (strain ATCC 19089 / CIP 103742 / CB 15)</name>
    <name type="common">Caulobacter crescentus</name>
    <dbReference type="NCBI Taxonomy" id="190650"/>
    <lineage>
        <taxon>Bacteria</taxon>
        <taxon>Pseudomonadati</taxon>
        <taxon>Pseudomonadota</taxon>
        <taxon>Alphaproteobacteria</taxon>
        <taxon>Caulobacterales</taxon>
        <taxon>Caulobacteraceae</taxon>
        <taxon>Caulobacter</taxon>
    </lineage>
</organism>